<accession>A8F526</accession>
<sequence length="245" mass="28674">MKRFMAIVSYDGTNFCGFQVQKDVRTVQGMFEQALERILKQRVITIAAGRTDTGVHANGQIVCFDCYLDIDEESMKNAMNANLPDDIYVRKVVEVDKNFHPRFDAKRRIYHYLIYNSQEPNLFIRNYAWWFPYKLNICKMREAAKFFEGEHDFRSFMKSGDHRENTVRTIYRVRVLQLRGGIILIRVEGRSFLRRMVRNMVGALVKVGVGEWKPEDISRVLELKDRSKAAVTAPPHGLYLYAVDF</sequence>
<gene>
    <name evidence="1" type="primary">truA</name>
    <name type="ordered locus">Tlet_0694</name>
</gene>
<keyword id="KW-0413">Isomerase</keyword>
<keyword id="KW-1185">Reference proteome</keyword>
<keyword id="KW-0819">tRNA processing</keyword>
<name>TRUA_PSELT</name>
<reference key="1">
    <citation type="submission" date="2007-08" db="EMBL/GenBank/DDBJ databases">
        <title>Complete sequence of Thermotoga lettingae TMO.</title>
        <authorList>
            <consortium name="US DOE Joint Genome Institute"/>
            <person name="Copeland A."/>
            <person name="Lucas S."/>
            <person name="Lapidus A."/>
            <person name="Barry K."/>
            <person name="Glavina del Rio T."/>
            <person name="Dalin E."/>
            <person name="Tice H."/>
            <person name="Pitluck S."/>
            <person name="Foster B."/>
            <person name="Bruce D."/>
            <person name="Schmutz J."/>
            <person name="Larimer F."/>
            <person name="Land M."/>
            <person name="Hauser L."/>
            <person name="Kyrpides N."/>
            <person name="Mikhailova N."/>
            <person name="Nelson K."/>
            <person name="Gogarten J.P."/>
            <person name="Noll K."/>
            <person name="Richardson P."/>
        </authorList>
    </citation>
    <scope>NUCLEOTIDE SEQUENCE [LARGE SCALE GENOMIC DNA]</scope>
    <source>
        <strain>ATCC BAA-301 / DSM 14385 / NBRC 107922 / TMO</strain>
    </source>
</reference>
<evidence type="ECO:0000255" key="1">
    <source>
        <dbReference type="HAMAP-Rule" id="MF_00171"/>
    </source>
</evidence>
<dbReference type="EC" id="5.4.99.12" evidence="1"/>
<dbReference type="EMBL" id="CP000812">
    <property type="protein sequence ID" value="ABV33260.1"/>
    <property type="molecule type" value="Genomic_DNA"/>
</dbReference>
<dbReference type="RefSeq" id="WP_012002741.1">
    <property type="nucleotide sequence ID" value="NZ_BSDV01000001.1"/>
</dbReference>
<dbReference type="SMR" id="A8F526"/>
<dbReference type="STRING" id="416591.Tlet_0694"/>
<dbReference type="KEGG" id="tle:Tlet_0694"/>
<dbReference type="eggNOG" id="COG0101">
    <property type="taxonomic scope" value="Bacteria"/>
</dbReference>
<dbReference type="HOGENOM" id="CLU_014673_0_1_0"/>
<dbReference type="OrthoDB" id="9811823at2"/>
<dbReference type="Proteomes" id="UP000002016">
    <property type="component" value="Chromosome"/>
</dbReference>
<dbReference type="GO" id="GO:0003723">
    <property type="term" value="F:RNA binding"/>
    <property type="evidence" value="ECO:0007669"/>
    <property type="project" value="InterPro"/>
</dbReference>
<dbReference type="GO" id="GO:0160147">
    <property type="term" value="F:tRNA pseudouridine(38-40) synthase activity"/>
    <property type="evidence" value="ECO:0007669"/>
    <property type="project" value="UniProtKB-EC"/>
</dbReference>
<dbReference type="GO" id="GO:0031119">
    <property type="term" value="P:tRNA pseudouridine synthesis"/>
    <property type="evidence" value="ECO:0007669"/>
    <property type="project" value="UniProtKB-UniRule"/>
</dbReference>
<dbReference type="CDD" id="cd02570">
    <property type="entry name" value="PseudoU_synth_EcTruA"/>
    <property type="match status" value="1"/>
</dbReference>
<dbReference type="FunFam" id="3.30.70.580:FF:000001">
    <property type="entry name" value="tRNA pseudouridine synthase A"/>
    <property type="match status" value="1"/>
</dbReference>
<dbReference type="Gene3D" id="3.30.70.660">
    <property type="entry name" value="Pseudouridine synthase I, catalytic domain, C-terminal subdomain"/>
    <property type="match status" value="1"/>
</dbReference>
<dbReference type="Gene3D" id="3.30.70.580">
    <property type="entry name" value="Pseudouridine synthase I, catalytic domain, N-terminal subdomain"/>
    <property type="match status" value="1"/>
</dbReference>
<dbReference type="HAMAP" id="MF_00171">
    <property type="entry name" value="TruA"/>
    <property type="match status" value="1"/>
</dbReference>
<dbReference type="InterPro" id="IPR020103">
    <property type="entry name" value="PsdUridine_synth_cat_dom_sf"/>
</dbReference>
<dbReference type="InterPro" id="IPR001406">
    <property type="entry name" value="PsdUridine_synth_TruA"/>
</dbReference>
<dbReference type="InterPro" id="IPR020097">
    <property type="entry name" value="PsdUridine_synth_TruA_a/b_dom"/>
</dbReference>
<dbReference type="InterPro" id="IPR020095">
    <property type="entry name" value="PsdUridine_synth_TruA_C"/>
</dbReference>
<dbReference type="InterPro" id="IPR020094">
    <property type="entry name" value="TruA/RsuA/RluB/E/F_N"/>
</dbReference>
<dbReference type="NCBIfam" id="TIGR00071">
    <property type="entry name" value="hisT_truA"/>
    <property type="match status" value="1"/>
</dbReference>
<dbReference type="PANTHER" id="PTHR11142">
    <property type="entry name" value="PSEUDOURIDYLATE SYNTHASE"/>
    <property type="match status" value="1"/>
</dbReference>
<dbReference type="PANTHER" id="PTHR11142:SF0">
    <property type="entry name" value="TRNA PSEUDOURIDINE SYNTHASE-LIKE 1"/>
    <property type="match status" value="1"/>
</dbReference>
<dbReference type="Pfam" id="PF01416">
    <property type="entry name" value="PseudoU_synth_1"/>
    <property type="match status" value="2"/>
</dbReference>
<dbReference type="PIRSF" id="PIRSF001430">
    <property type="entry name" value="tRNA_psdUrid_synth"/>
    <property type="match status" value="1"/>
</dbReference>
<dbReference type="SUPFAM" id="SSF55120">
    <property type="entry name" value="Pseudouridine synthase"/>
    <property type="match status" value="1"/>
</dbReference>
<feature type="chain" id="PRO_1000058310" description="tRNA pseudouridine synthase A">
    <location>
        <begin position="1"/>
        <end position="245"/>
    </location>
</feature>
<feature type="active site" description="Nucleophile" evidence="1">
    <location>
        <position position="52"/>
    </location>
</feature>
<feature type="binding site" evidence="1">
    <location>
        <position position="110"/>
    </location>
    <ligand>
        <name>substrate</name>
    </ligand>
</feature>
<organism>
    <name type="scientific">Pseudothermotoga lettingae (strain ATCC BAA-301 / DSM 14385 / NBRC 107922 / TMO)</name>
    <name type="common">Thermotoga lettingae</name>
    <dbReference type="NCBI Taxonomy" id="416591"/>
    <lineage>
        <taxon>Bacteria</taxon>
        <taxon>Thermotogati</taxon>
        <taxon>Thermotogota</taxon>
        <taxon>Thermotogae</taxon>
        <taxon>Thermotogales</taxon>
        <taxon>Thermotogaceae</taxon>
        <taxon>Pseudothermotoga</taxon>
    </lineage>
</organism>
<comment type="function">
    <text evidence="1">Formation of pseudouridine at positions 38, 39 and 40 in the anticodon stem and loop of transfer RNAs.</text>
</comment>
<comment type="catalytic activity">
    <reaction evidence="1">
        <text>uridine(38/39/40) in tRNA = pseudouridine(38/39/40) in tRNA</text>
        <dbReference type="Rhea" id="RHEA:22376"/>
        <dbReference type="Rhea" id="RHEA-COMP:10085"/>
        <dbReference type="Rhea" id="RHEA-COMP:10087"/>
        <dbReference type="ChEBI" id="CHEBI:65314"/>
        <dbReference type="ChEBI" id="CHEBI:65315"/>
        <dbReference type="EC" id="5.4.99.12"/>
    </reaction>
</comment>
<comment type="subunit">
    <text evidence="1">Homodimer.</text>
</comment>
<comment type="similarity">
    <text evidence="1">Belongs to the tRNA pseudouridine synthase TruA family.</text>
</comment>
<proteinExistence type="inferred from homology"/>
<protein>
    <recommendedName>
        <fullName evidence="1">tRNA pseudouridine synthase A</fullName>
        <ecNumber evidence="1">5.4.99.12</ecNumber>
    </recommendedName>
    <alternativeName>
        <fullName evidence="1">tRNA pseudouridine(38-40) synthase</fullName>
    </alternativeName>
    <alternativeName>
        <fullName evidence="1">tRNA pseudouridylate synthase I</fullName>
    </alternativeName>
    <alternativeName>
        <fullName evidence="1">tRNA-uridine isomerase I</fullName>
    </alternativeName>
</protein>